<sequence length="220" mass="23214">MTQDELKKAVGWAALEYVKPGTIVGVGTGSTAAHFIDALASIKGQIEGAVSSSDASTAKLKSYGIQVFDCNEVDELDIYVDGADEINSQMQMIKGGGAALTREKIIAAIARKFICIADASKQVDVLGKFPLPVEVIPMARSYVARELVKLGGLPEYRQNVLTDNGNVILDVHNLTILDAIALENKINNIAGVVTVGLFANRGADVALIGTADGVKTVELK</sequence>
<accession>A1JPP4</accession>
<comment type="function">
    <text evidence="1">Catalyzes the reversible conversion of ribose-5-phosphate to ribulose 5-phosphate.</text>
</comment>
<comment type="catalytic activity">
    <reaction evidence="1">
        <text>aldehydo-D-ribose 5-phosphate = D-ribulose 5-phosphate</text>
        <dbReference type="Rhea" id="RHEA:14657"/>
        <dbReference type="ChEBI" id="CHEBI:58121"/>
        <dbReference type="ChEBI" id="CHEBI:58273"/>
        <dbReference type="EC" id="5.3.1.6"/>
    </reaction>
</comment>
<comment type="pathway">
    <text evidence="1">Carbohydrate degradation; pentose phosphate pathway; D-ribose 5-phosphate from D-ribulose 5-phosphate (non-oxidative stage): step 1/1.</text>
</comment>
<comment type="subunit">
    <text evidence="1">Homodimer.</text>
</comment>
<comment type="similarity">
    <text evidence="1">Belongs to the ribose 5-phosphate isomerase family.</text>
</comment>
<protein>
    <recommendedName>
        <fullName evidence="1">Ribose-5-phosphate isomerase A</fullName>
        <ecNumber evidence="1">5.3.1.6</ecNumber>
    </recommendedName>
    <alternativeName>
        <fullName evidence="1">Phosphoriboisomerase A</fullName>
        <shortName evidence="1">PRI</shortName>
    </alternativeName>
</protein>
<feature type="chain" id="PRO_1000017030" description="Ribose-5-phosphate isomerase A">
    <location>
        <begin position="1"/>
        <end position="220"/>
    </location>
</feature>
<feature type="active site" description="Proton acceptor" evidence="1">
    <location>
        <position position="103"/>
    </location>
</feature>
<feature type="binding site" evidence="1">
    <location>
        <begin position="28"/>
        <end position="31"/>
    </location>
    <ligand>
        <name>substrate</name>
    </ligand>
</feature>
<feature type="binding site" evidence="1">
    <location>
        <begin position="81"/>
        <end position="84"/>
    </location>
    <ligand>
        <name>substrate</name>
    </ligand>
</feature>
<feature type="binding site" evidence="1">
    <location>
        <begin position="94"/>
        <end position="97"/>
    </location>
    <ligand>
        <name>substrate</name>
    </ligand>
</feature>
<feature type="binding site" evidence="1">
    <location>
        <position position="121"/>
    </location>
    <ligand>
        <name>substrate</name>
    </ligand>
</feature>
<gene>
    <name evidence="1" type="primary">rpiA</name>
    <name type="ordered locus">YE3401</name>
</gene>
<reference key="1">
    <citation type="journal article" date="2006" name="PLoS Genet.">
        <title>The complete genome sequence and comparative genome analysis of the high pathogenicity Yersinia enterocolitica strain 8081.</title>
        <authorList>
            <person name="Thomson N.R."/>
            <person name="Howard S."/>
            <person name="Wren B.W."/>
            <person name="Holden M.T.G."/>
            <person name="Crossman L."/>
            <person name="Challis G.L."/>
            <person name="Churcher C."/>
            <person name="Mungall K."/>
            <person name="Brooks K."/>
            <person name="Chillingworth T."/>
            <person name="Feltwell T."/>
            <person name="Abdellah Z."/>
            <person name="Hauser H."/>
            <person name="Jagels K."/>
            <person name="Maddison M."/>
            <person name="Moule S."/>
            <person name="Sanders M."/>
            <person name="Whitehead S."/>
            <person name="Quail M.A."/>
            <person name="Dougan G."/>
            <person name="Parkhill J."/>
            <person name="Prentice M.B."/>
        </authorList>
    </citation>
    <scope>NUCLEOTIDE SEQUENCE [LARGE SCALE GENOMIC DNA]</scope>
    <source>
        <strain>NCTC 13174 / 8081</strain>
    </source>
</reference>
<proteinExistence type="inferred from homology"/>
<evidence type="ECO:0000255" key="1">
    <source>
        <dbReference type="HAMAP-Rule" id="MF_00170"/>
    </source>
</evidence>
<organism>
    <name type="scientific">Yersinia enterocolitica serotype O:8 / biotype 1B (strain NCTC 13174 / 8081)</name>
    <dbReference type="NCBI Taxonomy" id="393305"/>
    <lineage>
        <taxon>Bacteria</taxon>
        <taxon>Pseudomonadati</taxon>
        <taxon>Pseudomonadota</taxon>
        <taxon>Gammaproteobacteria</taxon>
        <taxon>Enterobacterales</taxon>
        <taxon>Yersiniaceae</taxon>
        <taxon>Yersinia</taxon>
    </lineage>
</organism>
<keyword id="KW-0413">Isomerase</keyword>
<name>RPIA_YERE8</name>
<dbReference type="EC" id="5.3.1.6" evidence="1"/>
<dbReference type="EMBL" id="AM286415">
    <property type="protein sequence ID" value="CAL13427.1"/>
    <property type="molecule type" value="Genomic_DNA"/>
</dbReference>
<dbReference type="RefSeq" id="WP_005163342.1">
    <property type="nucleotide sequence ID" value="NC_008800.1"/>
</dbReference>
<dbReference type="RefSeq" id="YP_001007570.1">
    <property type="nucleotide sequence ID" value="NC_008800.1"/>
</dbReference>
<dbReference type="SMR" id="A1JPP4"/>
<dbReference type="GeneID" id="31410320"/>
<dbReference type="KEGG" id="yen:YE3401"/>
<dbReference type="PATRIC" id="fig|393305.7.peg.3613"/>
<dbReference type="eggNOG" id="COG0120">
    <property type="taxonomic scope" value="Bacteria"/>
</dbReference>
<dbReference type="HOGENOM" id="CLU_056590_1_1_6"/>
<dbReference type="OrthoDB" id="5870696at2"/>
<dbReference type="UniPathway" id="UPA00115">
    <property type="reaction ID" value="UER00412"/>
</dbReference>
<dbReference type="Proteomes" id="UP000000642">
    <property type="component" value="Chromosome"/>
</dbReference>
<dbReference type="GO" id="GO:0005829">
    <property type="term" value="C:cytosol"/>
    <property type="evidence" value="ECO:0007669"/>
    <property type="project" value="TreeGrafter"/>
</dbReference>
<dbReference type="GO" id="GO:0004751">
    <property type="term" value="F:ribose-5-phosphate isomerase activity"/>
    <property type="evidence" value="ECO:0007669"/>
    <property type="project" value="UniProtKB-UniRule"/>
</dbReference>
<dbReference type="GO" id="GO:0006014">
    <property type="term" value="P:D-ribose metabolic process"/>
    <property type="evidence" value="ECO:0007669"/>
    <property type="project" value="TreeGrafter"/>
</dbReference>
<dbReference type="GO" id="GO:0009052">
    <property type="term" value="P:pentose-phosphate shunt, non-oxidative branch"/>
    <property type="evidence" value="ECO:0007669"/>
    <property type="project" value="UniProtKB-UniRule"/>
</dbReference>
<dbReference type="CDD" id="cd01398">
    <property type="entry name" value="RPI_A"/>
    <property type="match status" value="1"/>
</dbReference>
<dbReference type="FunFam" id="3.30.70.260:FF:000004">
    <property type="entry name" value="Ribose-5-phosphate isomerase A"/>
    <property type="match status" value="1"/>
</dbReference>
<dbReference type="FunFam" id="3.40.50.1360:FF:000001">
    <property type="entry name" value="Ribose-5-phosphate isomerase A"/>
    <property type="match status" value="1"/>
</dbReference>
<dbReference type="Gene3D" id="3.30.70.260">
    <property type="match status" value="1"/>
</dbReference>
<dbReference type="Gene3D" id="3.40.50.1360">
    <property type="match status" value="1"/>
</dbReference>
<dbReference type="HAMAP" id="MF_00170">
    <property type="entry name" value="Rib_5P_isom_A"/>
    <property type="match status" value="1"/>
</dbReference>
<dbReference type="InterPro" id="IPR037171">
    <property type="entry name" value="NagB/RpiA_transferase-like"/>
</dbReference>
<dbReference type="InterPro" id="IPR020672">
    <property type="entry name" value="Ribose5P_isomerase_typA_subgr"/>
</dbReference>
<dbReference type="InterPro" id="IPR004788">
    <property type="entry name" value="Ribose5P_isomerase_type_A"/>
</dbReference>
<dbReference type="NCBIfam" id="NF001924">
    <property type="entry name" value="PRK00702.1"/>
    <property type="match status" value="1"/>
</dbReference>
<dbReference type="NCBIfam" id="TIGR00021">
    <property type="entry name" value="rpiA"/>
    <property type="match status" value="1"/>
</dbReference>
<dbReference type="PANTHER" id="PTHR11934">
    <property type="entry name" value="RIBOSE-5-PHOSPHATE ISOMERASE"/>
    <property type="match status" value="1"/>
</dbReference>
<dbReference type="PANTHER" id="PTHR11934:SF0">
    <property type="entry name" value="RIBOSE-5-PHOSPHATE ISOMERASE"/>
    <property type="match status" value="1"/>
</dbReference>
<dbReference type="Pfam" id="PF06026">
    <property type="entry name" value="Rib_5-P_isom_A"/>
    <property type="match status" value="1"/>
</dbReference>
<dbReference type="SUPFAM" id="SSF75445">
    <property type="entry name" value="D-ribose-5-phosphate isomerase (RpiA), lid domain"/>
    <property type="match status" value="1"/>
</dbReference>
<dbReference type="SUPFAM" id="SSF100950">
    <property type="entry name" value="NagB/RpiA/CoA transferase-like"/>
    <property type="match status" value="1"/>
</dbReference>